<protein>
    <recommendedName>
        <fullName evidence="1">tRNA(Phe) (4-demethylwyosine(37)-C(7)) aminocarboxypropyltransferase</fullName>
        <ecNumber evidence="1">2.5.1.114</ecNumber>
    </recommendedName>
    <alternativeName>
        <fullName>MjTYW2</fullName>
    </alternativeName>
    <alternativeName>
        <fullName evidence="1">tRNA wyosine derivatives biosynthesis protein Taw2</fullName>
    </alternativeName>
</protein>
<evidence type="ECO:0000255" key="1">
    <source>
        <dbReference type="HAMAP-Rule" id="MF_01922"/>
    </source>
</evidence>
<evidence type="ECO:0000269" key="2">
    <source>
    </source>
</evidence>
<evidence type="ECO:0007829" key="3">
    <source>
        <dbReference type="PDB" id="3A27"/>
    </source>
</evidence>
<dbReference type="EC" id="2.5.1.114" evidence="1"/>
<dbReference type="EMBL" id="L77117">
    <property type="protein sequence ID" value="AAB99577.1"/>
    <property type="molecule type" value="Genomic_DNA"/>
</dbReference>
<dbReference type="PIR" id="D64494">
    <property type="entry name" value="D64494"/>
</dbReference>
<dbReference type="RefSeq" id="WP_010871081.1">
    <property type="nucleotide sequence ID" value="NC_000909.1"/>
</dbReference>
<dbReference type="PDB" id="3A27">
    <property type="method" value="X-ray"/>
    <property type="resolution" value="2.00 A"/>
    <property type="chains" value="A=1-249"/>
</dbReference>
<dbReference type="PDBsum" id="3A27"/>
<dbReference type="SMR" id="Q58952"/>
<dbReference type="FunCoup" id="Q58952">
    <property type="interactions" value="1"/>
</dbReference>
<dbReference type="STRING" id="243232.MJ_1557"/>
<dbReference type="PaxDb" id="243232-MJ_1557"/>
<dbReference type="EnsemblBacteria" id="AAB99577">
    <property type="protein sequence ID" value="AAB99577"/>
    <property type="gene ID" value="MJ_1557"/>
</dbReference>
<dbReference type="GeneID" id="1452465"/>
<dbReference type="KEGG" id="mja:MJ_1557"/>
<dbReference type="eggNOG" id="arCOG10124">
    <property type="taxonomic scope" value="Archaea"/>
</dbReference>
<dbReference type="HOGENOM" id="CLU_022610_0_2_2"/>
<dbReference type="InParanoid" id="Q58952"/>
<dbReference type="OrthoDB" id="8079at2157"/>
<dbReference type="PhylomeDB" id="Q58952"/>
<dbReference type="BRENDA" id="2.5.1.114">
    <property type="organism ID" value="3260"/>
</dbReference>
<dbReference type="EvolutionaryTrace" id="Q58952"/>
<dbReference type="Proteomes" id="UP000000805">
    <property type="component" value="Chromosome"/>
</dbReference>
<dbReference type="GO" id="GO:0005737">
    <property type="term" value="C:cytoplasm"/>
    <property type="evidence" value="ECO:0000318"/>
    <property type="project" value="GO_Central"/>
</dbReference>
<dbReference type="GO" id="GO:0016765">
    <property type="term" value="F:transferase activity, transferring alkyl or aryl (other than methyl) groups"/>
    <property type="evidence" value="ECO:0000314"/>
    <property type="project" value="UniProtKB"/>
</dbReference>
<dbReference type="GO" id="GO:0102522">
    <property type="term" value="F:tRNA 4-demethylwyosine alpha-amino-alpha-carboxypropyltransferase activity"/>
    <property type="evidence" value="ECO:0007669"/>
    <property type="project" value="UniProtKB-EC"/>
</dbReference>
<dbReference type="GO" id="GO:0008175">
    <property type="term" value="F:tRNA methyltransferase activity"/>
    <property type="evidence" value="ECO:0000318"/>
    <property type="project" value="GO_Central"/>
</dbReference>
<dbReference type="GO" id="GO:0030488">
    <property type="term" value="P:tRNA methylation"/>
    <property type="evidence" value="ECO:0000318"/>
    <property type="project" value="GO_Central"/>
</dbReference>
<dbReference type="GO" id="GO:0006400">
    <property type="term" value="P:tRNA modification"/>
    <property type="evidence" value="ECO:0000314"/>
    <property type="project" value="UniProtKB"/>
</dbReference>
<dbReference type="CDD" id="cd02440">
    <property type="entry name" value="AdoMet_MTases"/>
    <property type="match status" value="1"/>
</dbReference>
<dbReference type="FunFam" id="3.40.50.150:FF:000431">
    <property type="entry name" value="tRNA(Phe) (4-demethylwyosine(37)-C(7)) aminocarboxypropyltransferase"/>
    <property type="match status" value="1"/>
</dbReference>
<dbReference type="Gene3D" id="3.40.50.150">
    <property type="entry name" value="Vaccinia Virus protein VP39"/>
    <property type="match status" value="1"/>
</dbReference>
<dbReference type="HAMAP" id="MF_01922">
    <property type="entry name" value="TYW2_archaea"/>
    <property type="match status" value="1"/>
</dbReference>
<dbReference type="InterPro" id="IPR030382">
    <property type="entry name" value="MeTrfase_TRM5/TYW2"/>
</dbReference>
<dbReference type="InterPro" id="IPR029063">
    <property type="entry name" value="SAM-dependent_MTases_sf"/>
</dbReference>
<dbReference type="InterPro" id="IPR056743">
    <property type="entry name" value="TRM5-TYW2-like_MTfase"/>
</dbReference>
<dbReference type="InterPro" id="IPR056744">
    <property type="entry name" value="TRM5/TYW2-like_N"/>
</dbReference>
<dbReference type="InterPro" id="IPR030867">
    <property type="entry name" value="TYW2_archaea"/>
</dbReference>
<dbReference type="NCBIfam" id="NF047824">
    <property type="entry name" value="tRNAwyosineTaw2Meth"/>
    <property type="match status" value="1"/>
</dbReference>
<dbReference type="PANTHER" id="PTHR23245">
    <property type="entry name" value="TRNA METHYLTRANSFERASE"/>
    <property type="match status" value="1"/>
</dbReference>
<dbReference type="PANTHER" id="PTHR23245:SF41">
    <property type="entry name" value="TRNA(PHE) (4-DEMETHYLWYOSINE(37)-C(7)) AMINOCARBOXYPROPYLTRANSFERASE"/>
    <property type="match status" value="1"/>
</dbReference>
<dbReference type="Pfam" id="PF02475">
    <property type="entry name" value="TRM5-TYW2_MTfase"/>
    <property type="match status" value="1"/>
</dbReference>
<dbReference type="Pfam" id="PF25133">
    <property type="entry name" value="TYW2_N_2"/>
    <property type="match status" value="1"/>
</dbReference>
<dbReference type="SUPFAM" id="SSF53335">
    <property type="entry name" value="S-adenosyl-L-methionine-dependent methyltransferases"/>
    <property type="match status" value="1"/>
</dbReference>
<dbReference type="PROSITE" id="PS51684">
    <property type="entry name" value="SAM_MT_TRM5_TYW2"/>
    <property type="match status" value="1"/>
</dbReference>
<organism>
    <name type="scientific">Methanocaldococcus jannaschii (strain ATCC 43067 / DSM 2661 / JAL-1 / JCM 10045 / NBRC 100440)</name>
    <name type="common">Methanococcus jannaschii</name>
    <dbReference type="NCBI Taxonomy" id="243232"/>
    <lineage>
        <taxon>Archaea</taxon>
        <taxon>Methanobacteriati</taxon>
        <taxon>Methanobacteriota</taxon>
        <taxon>Methanomada group</taxon>
        <taxon>Methanococci</taxon>
        <taxon>Methanococcales</taxon>
        <taxon>Methanocaldococcaceae</taxon>
        <taxon>Methanocaldococcus</taxon>
    </lineage>
</organism>
<comment type="function">
    <text evidence="1 2">S-adenosyl-L-methionine-dependent transferase that acts as a component of the wyosine derivatives biosynthesis pathway. Catalyzes the transfer of the alpha-amino-alpha-carboxypropyl (acp) group from S-adenosyl-L-methionine to 4-demethylwyosine (imG-14), forming 7-aminocarboxypropyl-demethylwyosine (wybutosine-86) at position 37 of tRNA(Phe).</text>
</comment>
<comment type="catalytic activity">
    <reaction evidence="1 2">
        <text>4-demethylwyosine(37) in tRNA(Phe) + S-adenosyl-L-methionine = 4-demethyl-7-[(3S)-3-amino-3-carboxypropyl]wyosine(37) in tRNA(Phe) + S-methyl-5'-thioadenosine + H(+)</text>
        <dbReference type="Rhea" id="RHEA:36355"/>
        <dbReference type="Rhea" id="RHEA-COMP:10164"/>
        <dbReference type="Rhea" id="RHEA-COMP:10378"/>
        <dbReference type="ChEBI" id="CHEBI:15378"/>
        <dbReference type="ChEBI" id="CHEBI:17509"/>
        <dbReference type="ChEBI" id="CHEBI:59789"/>
        <dbReference type="ChEBI" id="CHEBI:64315"/>
        <dbReference type="ChEBI" id="CHEBI:73550"/>
        <dbReference type="EC" id="2.5.1.114"/>
    </reaction>
</comment>
<comment type="subcellular location">
    <subcellularLocation>
        <location evidence="1">Cytoplasm</location>
    </subcellularLocation>
</comment>
<comment type="similarity">
    <text evidence="1">Belongs to the class I-like SAM-binding methyltransferase superfamily. TRM5/TYW2 family.</text>
</comment>
<sequence>MGIKYQKIGDVVIVKKELSEDEIREIVKRTKCKAILLYTTQITGEFRTPHVKILYGKETETIHKEYGCLFKLDVAKIMWSQGNIEERKRMAFISNENEVVVDMFAGIGYFTIPLAKYSKPKLVYAIEKNPTAYHYLCENIKLNKLNNVIPILADNRDVELKDVADRVIMGYVHKTHKFLDKTFEFLKDRGVIHYHETVAEKIMYERPIERLKFYAEKNGYKLIDYEVRKIKKYAPGVWHVVVDAKFERI</sequence>
<reference key="1">
    <citation type="journal article" date="1996" name="Science">
        <title>Complete genome sequence of the methanogenic archaeon, Methanococcus jannaschii.</title>
        <authorList>
            <person name="Bult C.J."/>
            <person name="White O."/>
            <person name="Olsen G.J."/>
            <person name="Zhou L."/>
            <person name="Fleischmann R.D."/>
            <person name="Sutton G.G."/>
            <person name="Blake J.A."/>
            <person name="FitzGerald L.M."/>
            <person name="Clayton R.A."/>
            <person name="Gocayne J.D."/>
            <person name="Kerlavage A.R."/>
            <person name="Dougherty B.A."/>
            <person name="Tomb J.-F."/>
            <person name="Adams M.D."/>
            <person name="Reich C.I."/>
            <person name="Overbeek R."/>
            <person name="Kirkness E.F."/>
            <person name="Weinstock K.G."/>
            <person name="Merrick J.M."/>
            <person name="Glodek A."/>
            <person name="Scott J.L."/>
            <person name="Geoghagen N.S.M."/>
            <person name="Weidman J.F."/>
            <person name="Fuhrmann J.L."/>
            <person name="Nguyen D."/>
            <person name="Utterback T.R."/>
            <person name="Kelley J.M."/>
            <person name="Peterson J.D."/>
            <person name="Sadow P.W."/>
            <person name="Hanna M.C."/>
            <person name="Cotton M.D."/>
            <person name="Roberts K.M."/>
            <person name="Hurst M.A."/>
            <person name="Kaine B.P."/>
            <person name="Borodovsky M."/>
            <person name="Klenk H.-P."/>
            <person name="Fraser C.M."/>
            <person name="Smith H.O."/>
            <person name="Woese C.R."/>
            <person name="Venter J.C."/>
        </authorList>
    </citation>
    <scope>NUCLEOTIDE SEQUENCE [LARGE SCALE GENOMIC DNA]</scope>
    <source>
        <strain>ATCC 43067 / DSM 2661 / JAL-1 / JCM 10045 / NBRC 100440</strain>
    </source>
</reference>
<reference key="2">
    <citation type="journal article" date="2010" name="Mol. Biol. Evol.">
        <title>Biosynthesis of wyosine derivatives in tRNA: an ancient and highly diverse pathway in Archaea.</title>
        <authorList>
            <person name="de Crecy-Lagard V."/>
            <person name="Brochier-Armanet C."/>
            <person name="Urbonavicius J."/>
            <person name="Fernandez B."/>
            <person name="Phillips G."/>
            <person name="Lyons B."/>
            <person name="Noma A."/>
            <person name="Alvarez S."/>
            <person name="Droogmans L."/>
            <person name="Armengaud J."/>
            <person name="Grosjean H."/>
        </authorList>
    </citation>
    <scope>GENE NAME</scope>
</reference>
<reference key="3">
    <citation type="journal article" date="2009" name="Proc. Natl. Acad. Sci. U.S.A.">
        <title>Structural basis of AdoMet-dependent aminocarboxypropyl transfer reaction catalyzed by tRNA-wybutosine synthesizing enzyme, TYW2.</title>
        <authorList>
            <person name="Umitsu M."/>
            <person name="Nishimasu H."/>
            <person name="Noma A."/>
            <person name="Suzuki T."/>
            <person name="Ishitani R."/>
            <person name="Nureki O."/>
        </authorList>
    </citation>
    <scope>X-RAY CRYSTALLOGRAPHY (2.0 ANGSTROMS) IN COMPLEX WITH S-ADENOSYL-L-METHIONINE</scope>
    <scope>FUNCTION</scope>
    <scope>CATALYTIC ACTIVITY</scope>
    <scope>PATHWAY</scope>
</reference>
<proteinExistence type="evidence at protein level"/>
<feature type="chain" id="PRO_0000107411" description="tRNA(Phe) (4-demethylwyosine(37)-C(7)) aminocarboxypropyltransferase">
    <location>
        <begin position="1"/>
        <end position="249"/>
    </location>
</feature>
<feature type="binding site" evidence="1 2">
    <location>
        <position position="80"/>
    </location>
    <ligand>
        <name>S-adenosyl-L-methionine</name>
        <dbReference type="ChEBI" id="CHEBI:59789"/>
    </ligand>
</feature>
<feature type="binding site" evidence="1">
    <location>
        <position position="87"/>
    </location>
    <ligand>
        <name>S-adenosyl-L-methionine</name>
        <dbReference type="ChEBI" id="CHEBI:59789"/>
    </ligand>
</feature>
<feature type="binding site" evidence="1 2">
    <location>
        <position position="127"/>
    </location>
    <ligand>
        <name>S-adenosyl-L-methionine</name>
        <dbReference type="ChEBI" id="CHEBI:59789"/>
    </ligand>
</feature>
<feature type="binding site">
    <location>
        <begin position="154"/>
        <end position="155"/>
    </location>
    <ligand>
        <name>S-adenosyl-L-methionine</name>
        <dbReference type="ChEBI" id="CHEBI:59789"/>
    </ligand>
</feature>
<feature type="strand" evidence="3">
    <location>
        <begin position="6"/>
        <end position="8"/>
    </location>
</feature>
<feature type="strand" evidence="3">
    <location>
        <begin position="11"/>
        <end position="14"/>
    </location>
</feature>
<feature type="strand" evidence="3">
    <location>
        <begin position="34"/>
        <end position="38"/>
    </location>
</feature>
<feature type="strand" evidence="3">
    <location>
        <begin position="52"/>
        <end position="55"/>
    </location>
</feature>
<feature type="strand" evidence="3">
    <location>
        <begin position="60"/>
        <end position="65"/>
    </location>
</feature>
<feature type="strand" evidence="3">
    <location>
        <begin position="68"/>
        <end position="73"/>
    </location>
</feature>
<feature type="turn" evidence="3">
    <location>
        <begin position="74"/>
        <end position="76"/>
    </location>
</feature>
<feature type="helix" evidence="3">
    <location>
        <begin position="81"/>
        <end position="83"/>
    </location>
</feature>
<feature type="helix" evidence="3">
    <location>
        <begin position="84"/>
        <end position="91"/>
    </location>
</feature>
<feature type="strand" evidence="3">
    <location>
        <begin position="99"/>
        <end position="102"/>
    </location>
</feature>
<feature type="turn" evidence="3">
    <location>
        <begin position="106"/>
        <end position="110"/>
    </location>
</feature>
<feature type="helix" evidence="3">
    <location>
        <begin position="111"/>
        <end position="117"/>
    </location>
</feature>
<feature type="strand" evidence="3">
    <location>
        <begin position="121"/>
        <end position="127"/>
    </location>
</feature>
<feature type="helix" evidence="3">
    <location>
        <begin position="130"/>
        <end position="142"/>
    </location>
</feature>
<feature type="strand" evidence="3">
    <location>
        <begin position="146"/>
        <end position="153"/>
    </location>
</feature>
<feature type="helix" evidence="3">
    <location>
        <begin position="155"/>
        <end position="157"/>
    </location>
</feature>
<feature type="strand" evidence="3">
    <location>
        <begin position="164"/>
        <end position="169"/>
    </location>
</feature>
<feature type="helix" evidence="3">
    <location>
        <begin position="175"/>
        <end position="178"/>
    </location>
</feature>
<feature type="helix" evidence="3">
    <location>
        <begin position="179"/>
        <end position="185"/>
    </location>
</feature>
<feature type="strand" evidence="3">
    <location>
        <begin position="186"/>
        <end position="199"/>
    </location>
</feature>
<feature type="helix" evidence="3">
    <location>
        <begin position="200"/>
        <end position="202"/>
    </location>
</feature>
<feature type="turn" evidence="3">
    <location>
        <begin position="203"/>
        <end position="205"/>
    </location>
</feature>
<feature type="helix" evidence="3">
    <location>
        <begin position="206"/>
        <end position="217"/>
    </location>
</feature>
<feature type="strand" evidence="3">
    <location>
        <begin position="220"/>
        <end position="234"/>
    </location>
</feature>
<feature type="strand" evidence="3">
    <location>
        <begin position="237"/>
        <end position="248"/>
    </location>
</feature>
<gene>
    <name evidence="1" type="primary">taw2</name>
    <name type="ordered locus">MJ1557</name>
</gene>
<accession>Q58952</accession>
<name>TYW2_METJA</name>
<keyword id="KW-0002">3D-structure</keyword>
<keyword id="KW-0963">Cytoplasm</keyword>
<keyword id="KW-1185">Reference proteome</keyword>
<keyword id="KW-0949">S-adenosyl-L-methionine</keyword>
<keyword id="KW-0808">Transferase</keyword>
<keyword id="KW-0819">tRNA processing</keyword>